<sequence length="193" mass="21103">MGLNDSSGTLVAPKPKGIIDPNTGRPVGEDDPFFLEINNELADKGFLVTSTEALITWARSGSLMFMTFGLACCAVEMIHTSMPRYDSERFGVAPRASPRQSDIMIVAGTLTNKMAPALRKVYDQMPEPRYVISMGSCANGGGYYHYSYSVVRGCDRIVPVDIYVPGCPPSAEALLYGILLLQKKIRRTGTIER</sequence>
<reference key="1">
    <citation type="journal article" date="2000" name="DNA Res.">
        <title>Complete genome structure of the nitrogen-fixing symbiotic bacterium Mesorhizobium loti.</title>
        <authorList>
            <person name="Kaneko T."/>
            <person name="Nakamura Y."/>
            <person name="Sato S."/>
            <person name="Asamizu E."/>
            <person name="Kato T."/>
            <person name="Sasamoto S."/>
            <person name="Watanabe A."/>
            <person name="Idesawa K."/>
            <person name="Ishikawa A."/>
            <person name="Kawashima K."/>
            <person name="Kimura T."/>
            <person name="Kishida Y."/>
            <person name="Kiyokawa C."/>
            <person name="Kohara M."/>
            <person name="Matsumoto M."/>
            <person name="Matsuno A."/>
            <person name="Mochizuki Y."/>
            <person name="Nakayama S."/>
            <person name="Nakazaki N."/>
            <person name="Shimpo S."/>
            <person name="Sugimoto M."/>
            <person name="Takeuchi C."/>
            <person name="Yamada M."/>
            <person name="Tabata S."/>
        </authorList>
    </citation>
    <scope>NUCLEOTIDE SEQUENCE [LARGE SCALE GENOMIC DNA]</scope>
    <source>
        <strain>LMG 29417 / CECT 9101 / MAFF 303099</strain>
    </source>
</reference>
<keyword id="KW-0004">4Fe-4S</keyword>
<keyword id="KW-0997">Cell inner membrane</keyword>
<keyword id="KW-1003">Cell membrane</keyword>
<keyword id="KW-0408">Iron</keyword>
<keyword id="KW-0411">Iron-sulfur</keyword>
<keyword id="KW-0472">Membrane</keyword>
<keyword id="KW-0479">Metal-binding</keyword>
<keyword id="KW-0520">NAD</keyword>
<keyword id="KW-0874">Quinone</keyword>
<keyword id="KW-1278">Translocase</keyword>
<keyword id="KW-0813">Transport</keyword>
<keyword id="KW-0830">Ubiquinone</keyword>
<gene>
    <name evidence="2" type="primary">nuoB</name>
    <name type="ordered locus">mll1371</name>
</gene>
<dbReference type="EC" id="7.1.1.-" evidence="2"/>
<dbReference type="EMBL" id="BA000012">
    <property type="protein sequence ID" value="BAB48758.1"/>
    <property type="status" value="ALT_INIT"/>
    <property type="molecule type" value="Genomic_DNA"/>
</dbReference>
<dbReference type="RefSeq" id="WP_013531090.1">
    <property type="nucleotide sequence ID" value="NC_002678.2"/>
</dbReference>
<dbReference type="SMR" id="Q98KQ6"/>
<dbReference type="KEGG" id="mlo:mll1371"/>
<dbReference type="eggNOG" id="COG0377">
    <property type="taxonomic scope" value="Bacteria"/>
</dbReference>
<dbReference type="HOGENOM" id="CLU_055737_7_0_5"/>
<dbReference type="Proteomes" id="UP000000552">
    <property type="component" value="Chromosome"/>
</dbReference>
<dbReference type="GO" id="GO:0005886">
    <property type="term" value="C:plasma membrane"/>
    <property type="evidence" value="ECO:0007669"/>
    <property type="project" value="UniProtKB-SubCell"/>
</dbReference>
<dbReference type="GO" id="GO:0045271">
    <property type="term" value="C:respiratory chain complex I"/>
    <property type="evidence" value="ECO:0007669"/>
    <property type="project" value="TreeGrafter"/>
</dbReference>
<dbReference type="GO" id="GO:0051539">
    <property type="term" value="F:4 iron, 4 sulfur cluster binding"/>
    <property type="evidence" value="ECO:0007669"/>
    <property type="project" value="UniProtKB-KW"/>
</dbReference>
<dbReference type="GO" id="GO:0005506">
    <property type="term" value="F:iron ion binding"/>
    <property type="evidence" value="ECO:0007669"/>
    <property type="project" value="UniProtKB-UniRule"/>
</dbReference>
<dbReference type="GO" id="GO:0008137">
    <property type="term" value="F:NADH dehydrogenase (ubiquinone) activity"/>
    <property type="evidence" value="ECO:0007669"/>
    <property type="project" value="InterPro"/>
</dbReference>
<dbReference type="GO" id="GO:0050136">
    <property type="term" value="F:NADH:ubiquinone reductase (non-electrogenic) activity"/>
    <property type="evidence" value="ECO:0007669"/>
    <property type="project" value="UniProtKB-UniRule"/>
</dbReference>
<dbReference type="GO" id="GO:0048038">
    <property type="term" value="F:quinone binding"/>
    <property type="evidence" value="ECO:0007669"/>
    <property type="project" value="UniProtKB-KW"/>
</dbReference>
<dbReference type="GO" id="GO:0009060">
    <property type="term" value="P:aerobic respiration"/>
    <property type="evidence" value="ECO:0007669"/>
    <property type="project" value="TreeGrafter"/>
</dbReference>
<dbReference type="GO" id="GO:0015990">
    <property type="term" value="P:electron transport coupled proton transport"/>
    <property type="evidence" value="ECO:0007669"/>
    <property type="project" value="TreeGrafter"/>
</dbReference>
<dbReference type="FunFam" id="3.40.50.12280:FF:000001">
    <property type="entry name" value="NADH-quinone oxidoreductase subunit B 2"/>
    <property type="match status" value="1"/>
</dbReference>
<dbReference type="Gene3D" id="3.40.50.12280">
    <property type="match status" value="1"/>
</dbReference>
<dbReference type="HAMAP" id="MF_01356">
    <property type="entry name" value="NDH1_NuoB"/>
    <property type="match status" value="1"/>
</dbReference>
<dbReference type="InterPro" id="IPR006137">
    <property type="entry name" value="NADH_UbQ_OxRdtase-like_20kDa"/>
</dbReference>
<dbReference type="InterPro" id="IPR006138">
    <property type="entry name" value="NADH_UQ_OxRdtase_20Kd_su"/>
</dbReference>
<dbReference type="NCBIfam" id="TIGR01957">
    <property type="entry name" value="nuoB_fam"/>
    <property type="match status" value="1"/>
</dbReference>
<dbReference type="NCBIfam" id="NF005012">
    <property type="entry name" value="PRK06411.1"/>
    <property type="match status" value="1"/>
</dbReference>
<dbReference type="PANTHER" id="PTHR11995">
    <property type="entry name" value="NADH DEHYDROGENASE"/>
    <property type="match status" value="1"/>
</dbReference>
<dbReference type="PANTHER" id="PTHR11995:SF14">
    <property type="entry name" value="NADH DEHYDROGENASE [UBIQUINONE] IRON-SULFUR PROTEIN 7, MITOCHONDRIAL"/>
    <property type="match status" value="1"/>
</dbReference>
<dbReference type="Pfam" id="PF01058">
    <property type="entry name" value="Oxidored_q6"/>
    <property type="match status" value="1"/>
</dbReference>
<dbReference type="SUPFAM" id="SSF56770">
    <property type="entry name" value="HydA/Nqo6-like"/>
    <property type="match status" value="1"/>
</dbReference>
<dbReference type="PROSITE" id="PS01150">
    <property type="entry name" value="COMPLEX1_20K"/>
    <property type="match status" value="1"/>
</dbReference>
<organism>
    <name type="scientific">Mesorhizobium japonicum (strain LMG 29417 / CECT 9101 / MAFF 303099)</name>
    <name type="common">Mesorhizobium loti (strain MAFF 303099)</name>
    <dbReference type="NCBI Taxonomy" id="266835"/>
    <lineage>
        <taxon>Bacteria</taxon>
        <taxon>Pseudomonadati</taxon>
        <taxon>Pseudomonadota</taxon>
        <taxon>Alphaproteobacteria</taxon>
        <taxon>Hyphomicrobiales</taxon>
        <taxon>Phyllobacteriaceae</taxon>
        <taxon>Mesorhizobium</taxon>
    </lineage>
</organism>
<protein>
    <recommendedName>
        <fullName evidence="2">NADH-quinone oxidoreductase subunit B</fullName>
        <ecNumber evidence="2">7.1.1.-</ecNumber>
    </recommendedName>
    <alternativeName>
        <fullName evidence="2">NADH dehydrogenase I subunit B</fullName>
    </alternativeName>
    <alternativeName>
        <fullName evidence="2">NDH-1 subunit B</fullName>
    </alternativeName>
</protein>
<evidence type="ECO:0000250" key="1"/>
<evidence type="ECO:0000255" key="2">
    <source>
        <dbReference type="HAMAP-Rule" id="MF_01356"/>
    </source>
</evidence>
<evidence type="ECO:0000256" key="3">
    <source>
        <dbReference type="SAM" id="MobiDB-lite"/>
    </source>
</evidence>
<evidence type="ECO:0000305" key="4"/>
<proteinExistence type="inferred from homology"/>
<accession>Q98KQ6</accession>
<name>NUOB_RHILO</name>
<comment type="function">
    <text evidence="1">NDH-1 shuttles electrons from NADH, via FMN and iron-sulfur (Fe-S) centers, to quinones in the respiratory chain. Couples the redox reaction to proton translocation (for every two electrons transferred, four hydrogen ions are translocated across the cytoplasmic membrane), and thus conserves the redox energy in a proton gradient (By similarity).</text>
</comment>
<comment type="catalytic activity">
    <reaction evidence="2">
        <text>a quinone + NADH + 5 H(+)(in) = a quinol + NAD(+) + 4 H(+)(out)</text>
        <dbReference type="Rhea" id="RHEA:57888"/>
        <dbReference type="ChEBI" id="CHEBI:15378"/>
        <dbReference type="ChEBI" id="CHEBI:24646"/>
        <dbReference type="ChEBI" id="CHEBI:57540"/>
        <dbReference type="ChEBI" id="CHEBI:57945"/>
        <dbReference type="ChEBI" id="CHEBI:132124"/>
    </reaction>
</comment>
<comment type="cofactor">
    <cofactor evidence="2">
        <name>[4Fe-4S] cluster</name>
        <dbReference type="ChEBI" id="CHEBI:49883"/>
    </cofactor>
    <text evidence="2">Binds 1 [4Fe-4S] cluster.</text>
</comment>
<comment type="subunit">
    <text evidence="2">NDH-1 is composed of 14 different subunits. Subunits NuoB, C, D, E, F, and G constitute the peripheral sector of the complex.</text>
</comment>
<comment type="subcellular location">
    <subcellularLocation>
        <location evidence="2">Cell inner membrane</location>
        <topology evidence="2">Peripheral membrane protein</topology>
        <orientation evidence="2">Cytoplasmic side</orientation>
    </subcellularLocation>
</comment>
<comment type="similarity">
    <text evidence="2">Belongs to the complex I 20 kDa subunit family.</text>
</comment>
<comment type="sequence caution" evidence="4">
    <conflict type="erroneous initiation">
        <sequence resource="EMBL-CDS" id="BAB48758"/>
    </conflict>
</comment>
<feature type="chain" id="PRO_0000358465" description="NADH-quinone oxidoreductase subunit B">
    <location>
        <begin position="1"/>
        <end position="193"/>
    </location>
</feature>
<feature type="region of interest" description="Disordered" evidence="3">
    <location>
        <begin position="1"/>
        <end position="25"/>
    </location>
</feature>
<feature type="binding site" evidence="2">
    <location>
        <position position="72"/>
    </location>
    <ligand>
        <name>[4Fe-4S] cluster</name>
        <dbReference type="ChEBI" id="CHEBI:49883"/>
    </ligand>
</feature>
<feature type="binding site" evidence="2">
    <location>
        <position position="73"/>
    </location>
    <ligand>
        <name>[4Fe-4S] cluster</name>
        <dbReference type="ChEBI" id="CHEBI:49883"/>
    </ligand>
</feature>
<feature type="binding site" evidence="2">
    <location>
        <position position="137"/>
    </location>
    <ligand>
        <name>[4Fe-4S] cluster</name>
        <dbReference type="ChEBI" id="CHEBI:49883"/>
    </ligand>
</feature>
<feature type="binding site" evidence="2">
    <location>
        <position position="167"/>
    </location>
    <ligand>
        <name>[4Fe-4S] cluster</name>
        <dbReference type="ChEBI" id="CHEBI:49883"/>
    </ligand>
</feature>